<organism>
    <name type="scientific">Pongo abelii</name>
    <name type="common">Sumatran orangutan</name>
    <name type="synonym">Pongo pygmaeus abelii</name>
    <dbReference type="NCBI Taxonomy" id="9601"/>
    <lineage>
        <taxon>Eukaryota</taxon>
        <taxon>Metazoa</taxon>
        <taxon>Chordata</taxon>
        <taxon>Craniata</taxon>
        <taxon>Vertebrata</taxon>
        <taxon>Euteleostomi</taxon>
        <taxon>Mammalia</taxon>
        <taxon>Eutheria</taxon>
        <taxon>Euarchontoglires</taxon>
        <taxon>Primates</taxon>
        <taxon>Haplorrhini</taxon>
        <taxon>Catarrhini</taxon>
        <taxon>Hominidae</taxon>
        <taxon>Pongo</taxon>
    </lineage>
</organism>
<protein>
    <recommendedName>
        <fullName>Tapasin-related protein</fullName>
        <shortName>TAPASIN-R</shortName>
    </recommendedName>
    <alternativeName>
        <fullName>TAP-binding protein-like</fullName>
    </alternativeName>
    <alternativeName>
        <fullName>TAP-binding protein-related protein</fullName>
        <shortName>TAPBP-R</shortName>
    </alternativeName>
    <alternativeName>
        <fullName>Tapasin-like</fullName>
    </alternativeName>
</protein>
<accession>Q5R8H1</accession>
<name>TPSNR_PONAB</name>
<dbReference type="EMBL" id="CR859781">
    <property type="protein sequence ID" value="CAH91939.1"/>
    <property type="status" value="ALT_FRAME"/>
    <property type="molecule type" value="mRNA"/>
</dbReference>
<dbReference type="RefSeq" id="NP_001126125.1">
    <property type="nucleotide sequence ID" value="NM_001132653.1"/>
</dbReference>
<dbReference type="SMR" id="Q5R8H1"/>
<dbReference type="FunCoup" id="Q5R8H1">
    <property type="interactions" value="337"/>
</dbReference>
<dbReference type="GlyCosmos" id="Q5R8H1">
    <property type="glycosylation" value="1 site, No reported glycans"/>
</dbReference>
<dbReference type="GeneID" id="100189634"/>
<dbReference type="CTD" id="55080"/>
<dbReference type="eggNOG" id="ENOG502QSXA">
    <property type="taxonomic scope" value="Eukaryota"/>
</dbReference>
<dbReference type="InParanoid" id="Q5R8H1"/>
<dbReference type="Proteomes" id="UP000001595">
    <property type="component" value="Unplaced"/>
</dbReference>
<dbReference type="GO" id="GO:0005789">
    <property type="term" value="C:endoplasmic reticulum membrane"/>
    <property type="evidence" value="ECO:0007669"/>
    <property type="project" value="UniProtKB-SubCell"/>
</dbReference>
<dbReference type="GO" id="GO:0000139">
    <property type="term" value="C:Golgi membrane"/>
    <property type="evidence" value="ECO:0007669"/>
    <property type="project" value="UniProtKB-SubCell"/>
</dbReference>
<dbReference type="GO" id="GO:0005886">
    <property type="term" value="C:plasma membrane"/>
    <property type="evidence" value="ECO:0007669"/>
    <property type="project" value="UniProtKB-SubCell"/>
</dbReference>
<dbReference type="GO" id="GO:0002376">
    <property type="term" value="P:immune system process"/>
    <property type="evidence" value="ECO:0007669"/>
    <property type="project" value="UniProtKB-KW"/>
</dbReference>
<dbReference type="CDD" id="cd05771">
    <property type="entry name" value="IgC1_Tapasin_R"/>
    <property type="match status" value="1"/>
</dbReference>
<dbReference type="FunFam" id="2.60.40.10:FF:001475">
    <property type="entry name" value="TAP binding protein-like variant"/>
    <property type="match status" value="1"/>
</dbReference>
<dbReference type="FunFam" id="2.60.40.10:FF:001914">
    <property type="entry name" value="TAP binding protein-like variant"/>
    <property type="match status" value="1"/>
</dbReference>
<dbReference type="FunFam" id="2.60.40.10:FF:001957">
    <property type="entry name" value="TAP binding protein-like variant"/>
    <property type="match status" value="1"/>
</dbReference>
<dbReference type="Gene3D" id="2.60.40.10">
    <property type="entry name" value="Immunoglobulins"/>
    <property type="match status" value="3"/>
</dbReference>
<dbReference type="InterPro" id="IPR007110">
    <property type="entry name" value="Ig-like_dom"/>
</dbReference>
<dbReference type="InterPro" id="IPR036179">
    <property type="entry name" value="Ig-like_dom_sf"/>
</dbReference>
<dbReference type="InterPro" id="IPR013783">
    <property type="entry name" value="Ig-like_fold"/>
</dbReference>
<dbReference type="InterPro" id="IPR003006">
    <property type="entry name" value="Ig/MHC_CS"/>
</dbReference>
<dbReference type="InterPro" id="IPR003597">
    <property type="entry name" value="Ig_C1-set"/>
</dbReference>
<dbReference type="InterPro" id="IPR003599">
    <property type="entry name" value="Ig_sub"/>
</dbReference>
<dbReference type="InterPro" id="IPR013106">
    <property type="entry name" value="Ig_V-set"/>
</dbReference>
<dbReference type="InterPro" id="IPR050380">
    <property type="entry name" value="Immune_Resp_Modulators"/>
</dbReference>
<dbReference type="PANTHER" id="PTHR23411">
    <property type="entry name" value="TAPASIN"/>
    <property type="match status" value="1"/>
</dbReference>
<dbReference type="Pfam" id="PF07654">
    <property type="entry name" value="C1-set"/>
    <property type="match status" value="1"/>
</dbReference>
<dbReference type="Pfam" id="PF07686">
    <property type="entry name" value="V-set"/>
    <property type="match status" value="1"/>
</dbReference>
<dbReference type="SMART" id="SM00409">
    <property type="entry name" value="IG"/>
    <property type="match status" value="1"/>
</dbReference>
<dbReference type="SMART" id="SM00407">
    <property type="entry name" value="IGc1"/>
    <property type="match status" value="1"/>
</dbReference>
<dbReference type="SUPFAM" id="SSF48726">
    <property type="entry name" value="Immunoglobulin"/>
    <property type="match status" value="2"/>
</dbReference>
<dbReference type="PROSITE" id="PS50835">
    <property type="entry name" value="IG_LIKE"/>
    <property type="match status" value="2"/>
</dbReference>
<dbReference type="PROSITE" id="PS00290">
    <property type="entry name" value="IG_MHC"/>
    <property type="match status" value="1"/>
</dbReference>
<keyword id="KW-1003">Cell membrane</keyword>
<keyword id="KW-1015">Disulfide bond</keyword>
<keyword id="KW-0256">Endoplasmic reticulum</keyword>
<keyword id="KW-0325">Glycoprotein</keyword>
<keyword id="KW-0333">Golgi apparatus</keyword>
<keyword id="KW-0391">Immunity</keyword>
<keyword id="KW-0393">Immunoglobulin domain</keyword>
<keyword id="KW-0472">Membrane</keyword>
<keyword id="KW-0492">Microsome</keyword>
<keyword id="KW-1185">Reference proteome</keyword>
<keyword id="KW-0677">Repeat</keyword>
<keyword id="KW-0732">Signal</keyword>
<keyword id="KW-0812">Transmembrane</keyword>
<keyword id="KW-1133">Transmembrane helix</keyword>
<reference key="1">
    <citation type="submission" date="2004-11" db="EMBL/GenBank/DDBJ databases">
        <authorList>
            <consortium name="The German cDNA consortium"/>
        </authorList>
    </citation>
    <scope>NUCLEOTIDE SEQUENCE [LARGE SCALE MRNA]</scope>
    <source>
        <tissue>Kidney</tissue>
    </source>
</reference>
<feature type="signal peptide" evidence="1">
    <location>
        <begin position="1"/>
        <end position="18"/>
    </location>
</feature>
<feature type="chain" id="PRO_0000014995" description="Tapasin-related protein">
    <location>
        <begin position="19"/>
        <end position="468"/>
    </location>
</feature>
<feature type="topological domain" description="Lumenal" evidence="3">
    <location>
        <begin position="19"/>
        <end position="405"/>
    </location>
</feature>
<feature type="transmembrane region" description="Helical" evidence="3">
    <location>
        <begin position="406"/>
        <end position="426"/>
    </location>
</feature>
<feature type="topological domain" description="Cytoplasmic" evidence="3">
    <location>
        <begin position="427"/>
        <end position="468"/>
    </location>
</feature>
<feature type="domain" description="Ig-like V-type">
    <location>
        <begin position="181"/>
        <end position="297"/>
    </location>
</feature>
<feature type="domain" description="Ig-like C1-type">
    <location>
        <begin position="304"/>
        <end position="394"/>
    </location>
</feature>
<feature type="glycosylation site" description="N-linked (GlcNAc...) asparagine" evidence="3">
    <location>
        <position position="265"/>
    </location>
</feature>
<feature type="disulfide bond" evidence="4">
    <location>
        <begin position="212"/>
        <end position="283"/>
    </location>
</feature>
<feature type="disulfide bond" evidence="4">
    <location>
        <begin position="321"/>
        <end position="382"/>
    </location>
</feature>
<comment type="function">
    <text evidence="2">Component of the antigen processing and presentation pathway, which binds to MHC class I coupled with beta2-microglobulin/B2M. Association between TAPBPR and MHC class I occurs in the absence of a functional peptide-loading complex (PLC). Expression seems to slow down and down-regulate MHC class I surface expression.</text>
</comment>
<comment type="subunit">
    <text evidence="2">Interacts with peptide-free HLA-A*02-B2M complexes or those loaded with low affinity peptides, likely facilitating peptide exchange onto higher affinity peptides. Interacts with MR1 in a ligand-independent way; this interaction may stabilize MR1 pool and facilitate ligand loading and dissociation.</text>
</comment>
<comment type="subcellular location">
    <subcellularLocation>
        <location evidence="2">Cell membrane</location>
        <topology evidence="1">Single-pass type I membrane protein</topology>
    </subcellularLocation>
    <subcellularLocation>
        <location evidence="2">Endoplasmic reticulum membrane</location>
        <topology evidence="1">Single-pass type I membrane protein</topology>
    </subcellularLocation>
    <subcellularLocation>
        <location evidence="2">Microsome membrane</location>
        <topology evidence="2">Single-pass type I membrane protein</topology>
    </subcellularLocation>
    <subcellularLocation>
        <location evidence="2">Golgi apparatus membrane</location>
        <topology evidence="2">Single-pass type I membrane protein</topology>
    </subcellularLocation>
    <text evidence="2">Mainly found in endoplasmic reticulum but a minority is found on the cell surface.</text>
</comment>
<comment type="sequence caution" evidence="5">
    <conflict type="frameshift">
        <sequence resource="EMBL-CDS" id="CAH91939"/>
    </conflict>
</comment>
<gene>
    <name type="primary">TAPBPL</name>
</gene>
<sequence length="468" mass="50429">MGTQEGWCLLLCLALSGAAETKPHPAERQWRAADVVLDCFLAKDGGHRAALASSEDRARASLVLKQVPVLDDGSLEDFTDFQGGTLAQDDPPIIFEASVDLVQIPQAEALLHADCSGKEVTCEISRYFLQMKGTTVETEAWFMANVQVSGGGPSISMVMKTPRDAKNEALWHPTLNLPLSPQGTVRTAVEFQVMTQTQSLSFLLGSSASLDCGFSMTPGLDLISVEWRLQHKGRGQLVYSWTTGQGQAVRKGATLEPEQLGMARNASLTLPSLTIQDEGTYICQITTSLYRAQQIIQLNIQASPKVRLSLANEALLPTLICNIAGYYPLDVVVTWTREELGGSPAQVSGASFSSLRQSVAGTYSISSSLTAEPGSAGATYTCQVMHISLEEPLGASTQVVPPERRTALGVIFASSLFLLALLFLGLQRRQAPTRVGLLQAERWKTTSCADTQSSHLHEDRTACVSQPS</sequence>
<evidence type="ECO:0000250" key="1"/>
<evidence type="ECO:0000250" key="2">
    <source>
        <dbReference type="UniProtKB" id="Q9BX59"/>
    </source>
</evidence>
<evidence type="ECO:0000255" key="3"/>
<evidence type="ECO:0000255" key="4">
    <source>
        <dbReference type="PROSITE-ProRule" id="PRU00114"/>
    </source>
</evidence>
<evidence type="ECO:0000305" key="5"/>
<proteinExistence type="evidence at transcript level"/>